<organism>
    <name type="scientific">Colwellia psychrerythraea (strain 34H / ATCC BAA-681)</name>
    <name type="common">Vibrio psychroerythus</name>
    <dbReference type="NCBI Taxonomy" id="167879"/>
    <lineage>
        <taxon>Bacteria</taxon>
        <taxon>Pseudomonadati</taxon>
        <taxon>Pseudomonadota</taxon>
        <taxon>Gammaproteobacteria</taxon>
        <taxon>Alteromonadales</taxon>
        <taxon>Colwelliaceae</taxon>
        <taxon>Colwellia</taxon>
    </lineage>
</organism>
<protein>
    <recommendedName>
        <fullName evidence="1">Proline--tRNA ligase</fullName>
        <ecNumber evidence="1">6.1.1.15</ecNumber>
    </recommendedName>
    <alternativeName>
        <fullName evidence="1">Prolyl-tRNA synthetase</fullName>
        <shortName evidence="1">ProRS</shortName>
    </alternativeName>
</protein>
<comment type="function">
    <text evidence="1">Catalyzes the attachment of proline to tRNA(Pro) in a two-step reaction: proline is first activated by ATP to form Pro-AMP and then transferred to the acceptor end of tRNA(Pro). As ProRS can inadvertently accommodate and process non-cognate amino acids such as alanine and cysteine, to avoid such errors it has two additional distinct editing activities against alanine. One activity is designated as 'pretransfer' editing and involves the tRNA(Pro)-independent hydrolysis of activated Ala-AMP. The other activity is designated 'posttransfer' editing and involves deacylation of mischarged Ala-tRNA(Pro). The misacylated Cys-tRNA(Pro) is not edited by ProRS.</text>
</comment>
<comment type="catalytic activity">
    <reaction evidence="1">
        <text>tRNA(Pro) + L-proline + ATP = L-prolyl-tRNA(Pro) + AMP + diphosphate</text>
        <dbReference type="Rhea" id="RHEA:14305"/>
        <dbReference type="Rhea" id="RHEA-COMP:9700"/>
        <dbReference type="Rhea" id="RHEA-COMP:9702"/>
        <dbReference type="ChEBI" id="CHEBI:30616"/>
        <dbReference type="ChEBI" id="CHEBI:33019"/>
        <dbReference type="ChEBI" id="CHEBI:60039"/>
        <dbReference type="ChEBI" id="CHEBI:78442"/>
        <dbReference type="ChEBI" id="CHEBI:78532"/>
        <dbReference type="ChEBI" id="CHEBI:456215"/>
        <dbReference type="EC" id="6.1.1.15"/>
    </reaction>
</comment>
<comment type="subunit">
    <text evidence="1">Homodimer.</text>
</comment>
<comment type="subcellular location">
    <subcellularLocation>
        <location evidence="1">Cytoplasm</location>
    </subcellularLocation>
</comment>
<comment type="domain">
    <text evidence="1">Consists of three domains: the N-terminal catalytic domain, the editing domain and the C-terminal anticodon-binding domain.</text>
</comment>
<comment type="similarity">
    <text evidence="1">Belongs to the class-II aminoacyl-tRNA synthetase family. ProS type 1 subfamily.</text>
</comment>
<dbReference type="EC" id="6.1.1.15" evidence="1"/>
<dbReference type="EMBL" id="CP000083">
    <property type="protein sequence ID" value="AAZ25239.1"/>
    <property type="molecule type" value="Genomic_DNA"/>
</dbReference>
<dbReference type="RefSeq" id="WP_011044007.1">
    <property type="nucleotide sequence ID" value="NC_003910.7"/>
</dbReference>
<dbReference type="SMR" id="Q47Z50"/>
<dbReference type="STRING" id="167879.CPS_3230"/>
<dbReference type="KEGG" id="cps:CPS_3230"/>
<dbReference type="eggNOG" id="COG0442">
    <property type="taxonomic scope" value="Bacteria"/>
</dbReference>
<dbReference type="HOGENOM" id="CLU_016739_0_0_6"/>
<dbReference type="Proteomes" id="UP000000547">
    <property type="component" value="Chromosome"/>
</dbReference>
<dbReference type="GO" id="GO:0005829">
    <property type="term" value="C:cytosol"/>
    <property type="evidence" value="ECO:0007669"/>
    <property type="project" value="TreeGrafter"/>
</dbReference>
<dbReference type="GO" id="GO:0002161">
    <property type="term" value="F:aminoacyl-tRNA deacylase activity"/>
    <property type="evidence" value="ECO:0007669"/>
    <property type="project" value="InterPro"/>
</dbReference>
<dbReference type="GO" id="GO:0005524">
    <property type="term" value="F:ATP binding"/>
    <property type="evidence" value="ECO:0007669"/>
    <property type="project" value="UniProtKB-UniRule"/>
</dbReference>
<dbReference type="GO" id="GO:0004827">
    <property type="term" value="F:proline-tRNA ligase activity"/>
    <property type="evidence" value="ECO:0007669"/>
    <property type="project" value="UniProtKB-UniRule"/>
</dbReference>
<dbReference type="GO" id="GO:0006433">
    <property type="term" value="P:prolyl-tRNA aminoacylation"/>
    <property type="evidence" value="ECO:0007669"/>
    <property type="project" value="UniProtKB-UniRule"/>
</dbReference>
<dbReference type="CDD" id="cd04334">
    <property type="entry name" value="ProRS-INS"/>
    <property type="match status" value="1"/>
</dbReference>
<dbReference type="CDD" id="cd00861">
    <property type="entry name" value="ProRS_anticodon_short"/>
    <property type="match status" value="1"/>
</dbReference>
<dbReference type="CDD" id="cd00779">
    <property type="entry name" value="ProRS_core_prok"/>
    <property type="match status" value="1"/>
</dbReference>
<dbReference type="FunFam" id="3.30.930.10:FF:000012">
    <property type="entry name" value="Proline--tRNA ligase"/>
    <property type="match status" value="1"/>
</dbReference>
<dbReference type="FunFam" id="3.30.930.10:FF:000097">
    <property type="entry name" value="Proline--tRNA ligase"/>
    <property type="match status" value="1"/>
</dbReference>
<dbReference type="Gene3D" id="3.40.50.800">
    <property type="entry name" value="Anticodon-binding domain"/>
    <property type="match status" value="1"/>
</dbReference>
<dbReference type="Gene3D" id="3.30.930.10">
    <property type="entry name" value="Bira Bifunctional Protein, Domain 2"/>
    <property type="match status" value="2"/>
</dbReference>
<dbReference type="Gene3D" id="3.90.960.10">
    <property type="entry name" value="YbaK/aminoacyl-tRNA synthetase-associated domain"/>
    <property type="match status" value="1"/>
</dbReference>
<dbReference type="HAMAP" id="MF_01569">
    <property type="entry name" value="Pro_tRNA_synth_type1"/>
    <property type="match status" value="1"/>
</dbReference>
<dbReference type="InterPro" id="IPR002314">
    <property type="entry name" value="aa-tRNA-synt_IIb"/>
</dbReference>
<dbReference type="InterPro" id="IPR006195">
    <property type="entry name" value="aa-tRNA-synth_II"/>
</dbReference>
<dbReference type="InterPro" id="IPR045864">
    <property type="entry name" value="aa-tRNA-synth_II/BPL/LPL"/>
</dbReference>
<dbReference type="InterPro" id="IPR004154">
    <property type="entry name" value="Anticodon-bd"/>
</dbReference>
<dbReference type="InterPro" id="IPR036621">
    <property type="entry name" value="Anticodon-bd_dom_sf"/>
</dbReference>
<dbReference type="InterPro" id="IPR002316">
    <property type="entry name" value="Pro-tRNA-ligase_IIa"/>
</dbReference>
<dbReference type="InterPro" id="IPR004500">
    <property type="entry name" value="Pro-tRNA-synth_IIa_bac-type"/>
</dbReference>
<dbReference type="InterPro" id="IPR023717">
    <property type="entry name" value="Pro-tRNA-Synthase_IIa_type1"/>
</dbReference>
<dbReference type="InterPro" id="IPR050062">
    <property type="entry name" value="Pro-tRNA_synthetase"/>
</dbReference>
<dbReference type="InterPro" id="IPR044140">
    <property type="entry name" value="ProRS_anticodon_short"/>
</dbReference>
<dbReference type="InterPro" id="IPR033730">
    <property type="entry name" value="ProRS_core_prok"/>
</dbReference>
<dbReference type="InterPro" id="IPR036754">
    <property type="entry name" value="YbaK/aa-tRNA-synt-asso_dom_sf"/>
</dbReference>
<dbReference type="InterPro" id="IPR007214">
    <property type="entry name" value="YbaK/aa-tRNA-synth-assoc-dom"/>
</dbReference>
<dbReference type="NCBIfam" id="NF006625">
    <property type="entry name" value="PRK09194.1"/>
    <property type="match status" value="1"/>
</dbReference>
<dbReference type="NCBIfam" id="TIGR00409">
    <property type="entry name" value="proS_fam_II"/>
    <property type="match status" value="1"/>
</dbReference>
<dbReference type="PANTHER" id="PTHR42753">
    <property type="entry name" value="MITOCHONDRIAL RIBOSOME PROTEIN L39/PROLYL-TRNA LIGASE FAMILY MEMBER"/>
    <property type="match status" value="1"/>
</dbReference>
<dbReference type="PANTHER" id="PTHR42753:SF2">
    <property type="entry name" value="PROLINE--TRNA LIGASE"/>
    <property type="match status" value="1"/>
</dbReference>
<dbReference type="Pfam" id="PF03129">
    <property type="entry name" value="HGTP_anticodon"/>
    <property type="match status" value="1"/>
</dbReference>
<dbReference type="Pfam" id="PF00587">
    <property type="entry name" value="tRNA-synt_2b"/>
    <property type="match status" value="1"/>
</dbReference>
<dbReference type="Pfam" id="PF04073">
    <property type="entry name" value="tRNA_edit"/>
    <property type="match status" value="1"/>
</dbReference>
<dbReference type="PIRSF" id="PIRSF001535">
    <property type="entry name" value="ProRS_1"/>
    <property type="match status" value="1"/>
</dbReference>
<dbReference type="PRINTS" id="PR01046">
    <property type="entry name" value="TRNASYNTHPRO"/>
</dbReference>
<dbReference type="SUPFAM" id="SSF52954">
    <property type="entry name" value="Class II aaRS ABD-related"/>
    <property type="match status" value="1"/>
</dbReference>
<dbReference type="SUPFAM" id="SSF55681">
    <property type="entry name" value="Class II aaRS and biotin synthetases"/>
    <property type="match status" value="1"/>
</dbReference>
<dbReference type="SUPFAM" id="SSF55826">
    <property type="entry name" value="YbaK/ProRS associated domain"/>
    <property type="match status" value="1"/>
</dbReference>
<dbReference type="PROSITE" id="PS50862">
    <property type="entry name" value="AA_TRNA_LIGASE_II"/>
    <property type="match status" value="1"/>
</dbReference>
<feature type="chain" id="PRO_0000248675" description="Proline--tRNA ligase">
    <location>
        <begin position="1"/>
        <end position="569"/>
    </location>
</feature>
<accession>Q47Z50</accession>
<name>SYP_COLP3</name>
<gene>
    <name evidence="1" type="primary">proS</name>
    <name type="ordered locus">CPS_3230</name>
</gene>
<sequence length="569" mass="62932">MRTSQYLLSTLKETPANAEVISHQLMLRAGLVRNLASGLYTWLPTGLRVLKKVEQIVREEMQRAGGNEILMPMVQPADLWQESGRLDDYGPELLRINDRHKRPFVLGPTHEEVVTKLVANELSSYKQLPLNVFQIQSKFRDEIRPRFGVMRGREFLMKDAYSFHLEDECLEKTYQIMFDAYCRIFERLELNFRPVLADTGSIGGEKSHEFHVLADSGEDDIAFSDASDFAANIEKAEALAPAGERAEPTQTLTKVATPNVKSMDDLVQCLSVDLKTTVKTLLVVGATVEGEAETVVALVLRGDHQLNEIKAEHLPQVATPITFASEEQILAAANCNAGSIGPVGLNIEVIVDRSAAHLSDFVCGANEDDAHLTGVNWQRDCNEISVHDIRNVVAGDPSPCGQGNIEIKRGIEVGHIFQLGRKYAEAMNCAVLNEGGKNQTLTMGCYGIGVSRIVAAAIEQNHDKYGIKWPKAIAPFQVAIVPMNMAKSARVKETAEALYESLNQAGIEVLFDDRKERPGVMFADHELMGTPLLLIIGERNLDAQQIELKNRITGEKSLIAIDEVMSLFN</sequence>
<evidence type="ECO:0000255" key="1">
    <source>
        <dbReference type="HAMAP-Rule" id="MF_01569"/>
    </source>
</evidence>
<proteinExistence type="inferred from homology"/>
<keyword id="KW-0030">Aminoacyl-tRNA synthetase</keyword>
<keyword id="KW-0067">ATP-binding</keyword>
<keyword id="KW-0963">Cytoplasm</keyword>
<keyword id="KW-0436">Ligase</keyword>
<keyword id="KW-0547">Nucleotide-binding</keyword>
<keyword id="KW-0648">Protein biosynthesis</keyword>
<reference key="1">
    <citation type="journal article" date="2005" name="Proc. Natl. Acad. Sci. U.S.A.">
        <title>The psychrophilic lifestyle as revealed by the genome sequence of Colwellia psychrerythraea 34H through genomic and proteomic analyses.</title>
        <authorList>
            <person name="Methe B.A."/>
            <person name="Nelson K.E."/>
            <person name="Deming J.W."/>
            <person name="Momen B."/>
            <person name="Melamud E."/>
            <person name="Zhang X."/>
            <person name="Moult J."/>
            <person name="Madupu R."/>
            <person name="Nelson W.C."/>
            <person name="Dodson R.J."/>
            <person name="Brinkac L.M."/>
            <person name="Daugherty S.C."/>
            <person name="Durkin A.S."/>
            <person name="DeBoy R.T."/>
            <person name="Kolonay J.F."/>
            <person name="Sullivan S.A."/>
            <person name="Zhou L."/>
            <person name="Davidsen T.M."/>
            <person name="Wu M."/>
            <person name="Huston A.L."/>
            <person name="Lewis M."/>
            <person name="Weaver B."/>
            <person name="Weidman J.F."/>
            <person name="Khouri H."/>
            <person name="Utterback T.R."/>
            <person name="Feldblyum T.V."/>
            <person name="Fraser C.M."/>
        </authorList>
    </citation>
    <scope>NUCLEOTIDE SEQUENCE [LARGE SCALE GENOMIC DNA]</scope>
    <source>
        <strain>34H / ATCC BAA-681</strain>
    </source>
</reference>